<keyword id="KW-0238">DNA-binding</keyword>
<keyword id="KW-0489">Methyltransferase</keyword>
<keyword id="KW-0539">Nucleus</keyword>
<keyword id="KW-1185">Reference proteome</keyword>
<keyword id="KW-0677">Repeat</keyword>
<keyword id="KW-0949">S-adenosyl-L-methionine</keyword>
<keyword id="KW-0808">Transferase</keyword>
<accession>Q9LXE5</accession>
<accession>Q6QPM0</accession>
<accession>Q9LXE6</accession>
<comment type="function">
    <text evidence="4 5 6">Involved in de novo DNA methylation. Controls asymmetric and CpNpG methylation. Required for FWA gene silencing but not for the maintenance of SUP gene silencing. Functionally redundant to CMT3 to maintain non-CpG methylation. Involved in RNA-directed DNA methylation.</text>
</comment>
<comment type="catalytic activity">
    <reaction evidence="2">
        <text>a 2'-deoxycytidine in DNA + S-adenosyl-L-methionine = a 5-methyl-2'-deoxycytidine in DNA + S-adenosyl-L-homocysteine + H(+)</text>
        <dbReference type="Rhea" id="RHEA:13681"/>
        <dbReference type="Rhea" id="RHEA-COMP:11369"/>
        <dbReference type="Rhea" id="RHEA-COMP:11370"/>
        <dbReference type="ChEBI" id="CHEBI:15378"/>
        <dbReference type="ChEBI" id="CHEBI:57856"/>
        <dbReference type="ChEBI" id="CHEBI:59789"/>
        <dbReference type="ChEBI" id="CHEBI:85452"/>
        <dbReference type="ChEBI" id="CHEBI:85454"/>
        <dbReference type="EC" id="2.1.1.37"/>
    </reaction>
</comment>
<comment type="subcellular location">
    <subcellularLocation>
        <location evidence="7">Nucleus</location>
    </subcellularLocation>
</comment>
<comment type="miscellaneous">
    <text>DRM2 is expressed at much higher levels than DRM1, which is scarcely detected, suggesting that DRM2 is the predominant de novo methylase.</text>
</comment>
<comment type="similarity">
    <text evidence="2">Belongs to the class I-like SAM-binding methyltransferase superfamily. DRM-methyltransferase family.</text>
</comment>
<comment type="sequence caution" evidence="7">
    <conflict type="erroneous gene model prediction">
        <sequence resource="EMBL-CDS" id="CAB89347"/>
    </conflict>
    <text>Was originally thought to correspond to two different genes At5g15370 and At5g15380.</text>
</comment>
<comment type="sequence caution" evidence="7">
    <conflict type="erroneous gene model prediction">
        <sequence resource="EMBL-CDS" id="CAB89348"/>
    </conflict>
    <text>Was originally thought to correspond to two different genes At5g15370 and At5g15380.</text>
</comment>
<organism>
    <name type="scientific">Arabidopsis thaliana</name>
    <name type="common">Mouse-ear cress</name>
    <dbReference type="NCBI Taxonomy" id="3702"/>
    <lineage>
        <taxon>Eukaryota</taxon>
        <taxon>Viridiplantae</taxon>
        <taxon>Streptophyta</taxon>
        <taxon>Embryophyta</taxon>
        <taxon>Tracheophyta</taxon>
        <taxon>Spermatophyta</taxon>
        <taxon>Magnoliopsida</taxon>
        <taxon>eudicotyledons</taxon>
        <taxon>Gunneridae</taxon>
        <taxon>Pentapetalae</taxon>
        <taxon>rosids</taxon>
        <taxon>malvids</taxon>
        <taxon>Brassicales</taxon>
        <taxon>Brassicaceae</taxon>
        <taxon>Camelineae</taxon>
        <taxon>Arabidopsis</taxon>
    </lineage>
</organism>
<protein>
    <recommendedName>
        <fullName>DNA (cytosine-5)-methyltransferase DRM1</fullName>
        <ecNumber>2.1.1.37</ecNumber>
    </recommendedName>
    <alternativeName>
        <fullName>Protein DOMAINS REARRANGED METHYLASE 1</fullName>
    </alternativeName>
</protein>
<reference key="1">
    <citation type="journal article" date="2000" name="Nature">
        <title>Sequence and analysis of chromosome 5 of the plant Arabidopsis thaliana.</title>
        <authorList>
            <person name="Tabata S."/>
            <person name="Kaneko T."/>
            <person name="Nakamura Y."/>
            <person name="Kotani H."/>
            <person name="Kato T."/>
            <person name="Asamizu E."/>
            <person name="Miyajima N."/>
            <person name="Sasamoto S."/>
            <person name="Kimura T."/>
            <person name="Hosouchi T."/>
            <person name="Kawashima K."/>
            <person name="Kohara M."/>
            <person name="Matsumoto M."/>
            <person name="Matsuno A."/>
            <person name="Muraki A."/>
            <person name="Nakayama S."/>
            <person name="Nakazaki N."/>
            <person name="Naruo K."/>
            <person name="Okumura S."/>
            <person name="Shinpo S."/>
            <person name="Takeuchi C."/>
            <person name="Wada T."/>
            <person name="Watanabe A."/>
            <person name="Yamada M."/>
            <person name="Yasuda M."/>
            <person name="Sato S."/>
            <person name="de la Bastide M."/>
            <person name="Huang E."/>
            <person name="Spiegel L."/>
            <person name="Gnoj L."/>
            <person name="O'Shaughnessy A."/>
            <person name="Preston R."/>
            <person name="Habermann K."/>
            <person name="Murray J."/>
            <person name="Johnson D."/>
            <person name="Rohlfing T."/>
            <person name="Nelson J."/>
            <person name="Stoneking T."/>
            <person name="Pepin K."/>
            <person name="Spieth J."/>
            <person name="Sekhon M."/>
            <person name="Armstrong J."/>
            <person name="Becker M."/>
            <person name="Belter E."/>
            <person name="Cordum H."/>
            <person name="Cordes M."/>
            <person name="Courtney L."/>
            <person name="Courtney W."/>
            <person name="Dante M."/>
            <person name="Du H."/>
            <person name="Edwards J."/>
            <person name="Fryman J."/>
            <person name="Haakensen B."/>
            <person name="Lamar E."/>
            <person name="Latreille P."/>
            <person name="Leonard S."/>
            <person name="Meyer R."/>
            <person name="Mulvaney E."/>
            <person name="Ozersky P."/>
            <person name="Riley A."/>
            <person name="Strowmatt C."/>
            <person name="Wagner-McPherson C."/>
            <person name="Wollam A."/>
            <person name="Yoakum M."/>
            <person name="Bell M."/>
            <person name="Dedhia N."/>
            <person name="Parnell L."/>
            <person name="Shah R."/>
            <person name="Rodriguez M."/>
            <person name="Hoon See L."/>
            <person name="Vil D."/>
            <person name="Baker J."/>
            <person name="Kirchoff K."/>
            <person name="Toth K."/>
            <person name="King L."/>
            <person name="Bahret A."/>
            <person name="Miller B."/>
            <person name="Marra M.A."/>
            <person name="Martienssen R."/>
            <person name="McCombie W.R."/>
            <person name="Wilson R.K."/>
            <person name="Murphy G."/>
            <person name="Bancroft I."/>
            <person name="Volckaert G."/>
            <person name="Wambutt R."/>
            <person name="Duesterhoeft A."/>
            <person name="Stiekema W."/>
            <person name="Pohl T."/>
            <person name="Entian K.-D."/>
            <person name="Terryn N."/>
            <person name="Hartley N."/>
            <person name="Bent E."/>
            <person name="Johnson S."/>
            <person name="Langham S.-A."/>
            <person name="McCullagh B."/>
            <person name="Robben J."/>
            <person name="Grymonprez B."/>
            <person name="Zimmermann W."/>
            <person name="Ramsperger U."/>
            <person name="Wedler H."/>
            <person name="Balke K."/>
            <person name="Wedler E."/>
            <person name="Peters S."/>
            <person name="van Staveren M."/>
            <person name="Dirkse W."/>
            <person name="Mooijman P."/>
            <person name="Klein Lankhorst R."/>
            <person name="Weitzenegger T."/>
            <person name="Bothe G."/>
            <person name="Rose M."/>
            <person name="Hauf J."/>
            <person name="Berneiser S."/>
            <person name="Hempel S."/>
            <person name="Feldpausch M."/>
            <person name="Lamberth S."/>
            <person name="Villarroel R."/>
            <person name="Gielen J."/>
            <person name="Ardiles W."/>
            <person name="Bents O."/>
            <person name="Lemcke K."/>
            <person name="Kolesov G."/>
            <person name="Mayer K.F.X."/>
            <person name="Rudd S."/>
            <person name="Schoof H."/>
            <person name="Schueller C."/>
            <person name="Zaccaria P."/>
            <person name="Mewes H.-W."/>
            <person name="Bevan M."/>
            <person name="Fransz P.F."/>
        </authorList>
    </citation>
    <scope>NUCLEOTIDE SEQUENCE [LARGE SCALE GENOMIC DNA]</scope>
    <source>
        <strain>cv. Columbia</strain>
    </source>
</reference>
<reference key="2">
    <citation type="journal article" date="2017" name="Plant J.">
        <title>Araport11: a complete reannotation of the Arabidopsis thaliana reference genome.</title>
        <authorList>
            <person name="Cheng C.Y."/>
            <person name="Krishnakumar V."/>
            <person name="Chan A.P."/>
            <person name="Thibaud-Nissen F."/>
            <person name="Schobel S."/>
            <person name="Town C.D."/>
        </authorList>
    </citation>
    <scope>GENOME REANNOTATION</scope>
    <source>
        <strain>cv. Columbia</strain>
    </source>
</reference>
<reference key="3">
    <citation type="journal article" date="2004" name="Plant J.">
        <title>Efficient discovery of DNA polymorphisms in natural populations by Ecotilling.</title>
        <authorList>
            <person name="Comai L."/>
            <person name="Young K."/>
            <person name="Till B.J."/>
            <person name="Reynolds S.H."/>
            <person name="Greene E.A."/>
            <person name="Codomo C.A."/>
            <person name="Enns L.C."/>
            <person name="Johnson J.E."/>
            <person name="Burtner C."/>
            <person name="Odden A.R."/>
            <person name="Henikoff S."/>
        </authorList>
    </citation>
    <scope>NUCLEOTIDE SEQUENCE [GENOMIC DNA] OF 264-570</scope>
    <source>
        <strain>cv. Columbia</strain>
    </source>
</reference>
<reference key="4">
    <citation type="journal article" date="2002" name="Proc. Natl. Acad. Sci. U.S.A.">
        <title>Locus-specific control of asymmetric and CpNpG methylation by the DRM and CMT3 methyltransferase genes.</title>
        <authorList>
            <person name="Cao X."/>
            <person name="Jacobsen S.E."/>
        </authorList>
    </citation>
    <scope>FUNCTION</scope>
</reference>
<reference key="5">
    <citation type="journal article" date="2002" name="Curr. Biol.">
        <title>Role of the arabidopsis DRM methyltransferases in de novo DNA methylation and gene silencing.</title>
        <authorList>
            <person name="Cao X."/>
            <person name="Jacobsen S.E."/>
        </authorList>
    </citation>
    <scope>FUNCTION</scope>
</reference>
<reference key="6">
    <citation type="journal article" date="2003" name="Curr. Biol.">
        <title>Role of the DRM and CMT3 methyltransferases in RNA-directed DNA methylation.</title>
        <authorList>
            <person name="Cao X."/>
            <person name="Aufsatz W."/>
            <person name="Zilberman D."/>
            <person name="Mette M.F."/>
            <person name="Huang M.S."/>
            <person name="Matzke M."/>
            <person name="Jacobsen S.E."/>
        </authorList>
    </citation>
    <scope>FUNCTION</scope>
</reference>
<dbReference type="EC" id="2.1.1.37"/>
<dbReference type="EMBL" id="AL353993">
    <property type="protein sequence ID" value="CAB89347.1"/>
    <property type="status" value="ALT_SEQ"/>
    <property type="molecule type" value="Genomic_DNA"/>
</dbReference>
<dbReference type="EMBL" id="AL353993">
    <property type="protein sequence ID" value="CAB89348.1"/>
    <property type="status" value="ALT_SEQ"/>
    <property type="molecule type" value="Genomic_DNA"/>
</dbReference>
<dbReference type="EMBL" id="CP002688">
    <property type="protein sequence ID" value="AED92154.1"/>
    <property type="molecule type" value="Genomic_DNA"/>
</dbReference>
<dbReference type="EMBL" id="AY530748">
    <property type="protein sequence ID" value="AAS45433.1"/>
    <property type="molecule type" value="Genomic_DNA"/>
</dbReference>
<dbReference type="PIR" id="T49972">
    <property type="entry name" value="T49972"/>
</dbReference>
<dbReference type="PIR" id="T49973">
    <property type="entry name" value="T49973"/>
</dbReference>
<dbReference type="RefSeq" id="NP_197042.2">
    <property type="nucleotide sequence ID" value="NM_121542.3"/>
</dbReference>
<dbReference type="SMR" id="Q9LXE5"/>
<dbReference type="FunCoup" id="Q9LXE5">
    <property type="interactions" value="6"/>
</dbReference>
<dbReference type="STRING" id="3702.Q9LXE5"/>
<dbReference type="REBASE" id="15559">
    <property type="entry name" value="M.AthDRM1"/>
</dbReference>
<dbReference type="PaxDb" id="3702-AT5G15380.1"/>
<dbReference type="ProteomicsDB" id="224351"/>
<dbReference type="EnsemblPlants" id="AT5G15380.1">
    <property type="protein sequence ID" value="AT5G15380.1"/>
    <property type="gene ID" value="AT5G15380"/>
</dbReference>
<dbReference type="GeneID" id="831390"/>
<dbReference type="Gramene" id="AT5G15380.1">
    <property type="protein sequence ID" value="AT5G15380.1"/>
    <property type="gene ID" value="AT5G15380"/>
</dbReference>
<dbReference type="KEGG" id="ath:AT5G15380"/>
<dbReference type="Araport" id="AT5G15380"/>
<dbReference type="TAIR" id="AT5G15380">
    <property type="gene designation" value="DRM1"/>
</dbReference>
<dbReference type="eggNOG" id="ENOG502QVZV">
    <property type="taxonomic scope" value="Eukaryota"/>
</dbReference>
<dbReference type="HOGENOM" id="CLU_006805_2_0_1"/>
<dbReference type="InParanoid" id="Q9LXE5"/>
<dbReference type="OMA" id="KFEWKIY"/>
<dbReference type="PhylomeDB" id="Q9LXE5"/>
<dbReference type="PRO" id="PR:Q9LXE5"/>
<dbReference type="Proteomes" id="UP000006548">
    <property type="component" value="Chromosome 5"/>
</dbReference>
<dbReference type="ExpressionAtlas" id="Q9LXE5">
    <property type="expression patterns" value="baseline and differential"/>
</dbReference>
<dbReference type="GO" id="GO:0005634">
    <property type="term" value="C:nucleus"/>
    <property type="evidence" value="ECO:0000318"/>
    <property type="project" value="GO_Central"/>
</dbReference>
<dbReference type="GO" id="GO:0003886">
    <property type="term" value="F:DNA (cytosine-5-)-methyltransferase activity"/>
    <property type="evidence" value="ECO:0000315"/>
    <property type="project" value="TAIR"/>
</dbReference>
<dbReference type="GO" id="GO:0003677">
    <property type="term" value="F:DNA binding"/>
    <property type="evidence" value="ECO:0007669"/>
    <property type="project" value="UniProtKB-KW"/>
</dbReference>
<dbReference type="GO" id="GO:0050832">
    <property type="term" value="P:defense response to fungus"/>
    <property type="evidence" value="ECO:0000316"/>
    <property type="project" value="TAIR"/>
</dbReference>
<dbReference type="GO" id="GO:0006346">
    <property type="term" value="P:DNA methylation-dependent constitutive heterochromatin formation"/>
    <property type="evidence" value="ECO:0000315"/>
    <property type="project" value="UniProtKB"/>
</dbReference>
<dbReference type="GO" id="GO:0032259">
    <property type="term" value="P:methylation"/>
    <property type="evidence" value="ECO:0007669"/>
    <property type="project" value="UniProtKB-KW"/>
</dbReference>
<dbReference type="Gene3D" id="1.10.8.10">
    <property type="entry name" value="DNA helicase RuvA subunit, C-terminal domain"/>
    <property type="match status" value="2"/>
</dbReference>
<dbReference type="Gene3D" id="3.40.50.150">
    <property type="entry name" value="Vaccinia Virus protein VP39"/>
    <property type="match status" value="2"/>
</dbReference>
<dbReference type="InterPro" id="IPR001525">
    <property type="entry name" value="C5_MeTfrase"/>
</dbReference>
<dbReference type="InterPro" id="IPR029063">
    <property type="entry name" value="SAM-dependent_MTases_sf"/>
</dbReference>
<dbReference type="InterPro" id="IPR030380">
    <property type="entry name" value="SAM_MeTfrase_DRM"/>
</dbReference>
<dbReference type="InterPro" id="IPR015940">
    <property type="entry name" value="UBA"/>
</dbReference>
<dbReference type="PANTHER" id="PTHR23068:SF45">
    <property type="entry name" value="DNA (CYTOSINE-5)-METHYLTRANSFERASE DRM1"/>
    <property type="match status" value="1"/>
</dbReference>
<dbReference type="PANTHER" id="PTHR23068">
    <property type="entry name" value="DNA CYTOSINE-5- -METHYLTRANSFERASE 3-RELATED"/>
    <property type="match status" value="1"/>
</dbReference>
<dbReference type="Pfam" id="PF00145">
    <property type="entry name" value="DNA_methylase"/>
    <property type="match status" value="1"/>
</dbReference>
<dbReference type="SUPFAM" id="SSF53335">
    <property type="entry name" value="S-adenosyl-L-methionine-dependent methyltransferases"/>
    <property type="match status" value="2"/>
</dbReference>
<dbReference type="PROSITE" id="PS51680">
    <property type="entry name" value="SAM_MT_DRM"/>
    <property type="match status" value="1"/>
</dbReference>
<dbReference type="PROSITE" id="PS50030">
    <property type="entry name" value="UBA"/>
    <property type="match status" value="2"/>
</dbReference>
<evidence type="ECO:0000255" key="1">
    <source>
        <dbReference type="PROSITE-ProRule" id="PRU00212"/>
    </source>
</evidence>
<evidence type="ECO:0000255" key="2">
    <source>
        <dbReference type="PROSITE-ProRule" id="PRU01017"/>
    </source>
</evidence>
<evidence type="ECO:0000256" key="3">
    <source>
        <dbReference type="SAM" id="MobiDB-lite"/>
    </source>
</evidence>
<evidence type="ECO:0000269" key="4">
    <source>
    </source>
</evidence>
<evidence type="ECO:0000269" key="5">
    <source>
    </source>
</evidence>
<evidence type="ECO:0000269" key="6">
    <source>
    </source>
</evidence>
<evidence type="ECO:0000305" key="7"/>
<gene>
    <name type="primary">DRM1</name>
    <name type="ordered locus">At5g15380/At5g15370</name>
    <name type="ORF">F8M21.270/F8M21.260</name>
</gene>
<sequence length="624" mass="70918">MVMSHIFLISQIQEVEHGDSDDVNWNTDDDELAIDNFQFSPSPVHISATSPNSIQNRISDETVASFVEMGFSTQMIARAIEETAGANMEPMMILETLFNYSASTEASSSKSKVINHFIAMGFPEEHVIKAMQEHGDEDVGEITNALLTYAEVDKLRESEDMNININDDDDDNLYSLSSDDEEDELNNSSNEDRILQALIKMGYLREDAAIAIERCGEDASMEEVVDFICAAQMARQFDEIYAEPDKKELMNNNKKRRTYTETPRKPNTDQLISLPKEMIGFGVPNHPGLMMHRPVPIPDIARGPPFFYYENVAMTPKGVWAKISSHLYDIVPEFVDSKHFCAAARKRGYIHNLPIQNRFQIQPPQHNTIQEAFPLTKRWWPSWDGRTKLNCLLTCIASSRLTEKIREALERYDGETPLDVQKWVMYECKKWNLVWVGKNKLAPLDADEMEKLLGFPRDHTRGGGISTTDRYKSLGNSFQVDTVAYHLSVLKPLFPNGINVLSLFTGIGGGEVALHRLQIKMNVVVSVEISDANRNILRSFWEQTNQKGILREFKDVQKLDDNTIERLMDEYGGFDLVIGGSPCNNLAGGNRHHRVGLGGEHSSLFFDYCRILEAVRRKARHMRR</sequence>
<name>DRM1L_ARATH</name>
<feature type="chain" id="PRO_0000381941" description="DNA (cytosine-5)-methyltransferase DRM1">
    <location>
        <begin position="1"/>
        <end position="624"/>
    </location>
</feature>
<feature type="domain" description="UBA 1" evidence="1">
    <location>
        <begin position="57"/>
        <end position="100"/>
    </location>
</feature>
<feature type="domain" description="UBA 2" evidence="1">
    <location>
        <begin position="108"/>
        <end position="149"/>
    </location>
</feature>
<feature type="domain" description="UBA 3" evidence="1">
    <location>
        <begin position="188"/>
        <end position="231"/>
    </location>
</feature>
<feature type="domain" description="SAM-dependent MTase DRM-type" evidence="2">
    <location>
        <begin position="291"/>
        <end position="622"/>
    </location>
</feature>
<feature type="region of interest" description="Disordered" evidence="3">
    <location>
        <begin position="160"/>
        <end position="189"/>
    </location>
</feature>
<feature type="compositionally biased region" description="Acidic residues" evidence="3">
    <location>
        <begin position="166"/>
        <end position="185"/>
    </location>
</feature>
<proteinExistence type="inferred from homology"/>